<feature type="chain" id="PRO_0000107703" description="Nucleotide-binding protein DR_1434">
    <location>
        <begin position="1"/>
        <end position="283"/>
    </location>
</feature>
<feature type="binding site" evidence="1">
    <location>
        <begin position="8"/>
        <end position="15"/>
    </location>
    <ligand>
        <name>ATP</name>
        <dbReference type="ChEBI" id="CHEBI:30616"/>
    </ligand>
</feature>
<feature type="binding site" evidence="1">
    <location>
        <begin position="57"/>
        <end position="60"/>
    </location>
    <ligand>
        <name>GTP</name>
        <dbReference type="ChEBI" id="CHEBI:37565"/>
    </ligand>
</feature>
<evidence type="ECO:0000255" key="1">
    <source>
        <dbReference type="HAMAP-Rule" id="MF_00636"/>
    </source>
</evidence>
<sequence>MPFVIVSGLSGSGKSTALRTLEDAGFFITDNLPPELWNAMHDLVTARGIENVAVSTDTRTREFLAALEPSYVRLSRRREDLRVLFLEANAEVLLGRYNLSRREHPLGETLMVDFARERELLAPLRGIADTVIDTTDLSAAQLSQRVMHLFRLEHAFTLRLLSFGFKHAPPRDADLVLDVRSLPNPYYDETLRSKSGRQPDVAAYVFRDAEAEQFYGELRHFVQTAAERARASGRHSYTVGIGCTGGQHRSVAVAERLLRELQASSIETELMDHRDMREGGEPT</sequence>
<dbReference type="EMBL" id="AE000513">
    <property type="protein sequence ID" value="AAF11006.1"/>
    <property type="molecule type" value="Genomic_DNA"/>
</dbReference>
<dbReference type="PIR" id="D75395">
    <property type="entry name" value="D75395"/>
</dbReference>
<dbReference type="RefSeq" id="NP_295157.1">
    <property type="nucleotide sequence ID" value="NC_001263.1"/>
</dbReference>
<dbReference type="RefSeq" id="WP_010888073.1">
    <property type="nucleotide sequence ID" value="NC_001263.1"/>
</dbReference>
<dbReference type="SMR" id="Q9RUF2"/>
<dbReference type="FunCoup" id="Q9RUF2">
    <property type="interactions" value="148"/>
</dbReference>
<dbReference type="STRING" id="243230.DR_1434"/>
<dbReference type="PaxDb" id="243230-DR_1434"/>
<dbReference type="EnsemblBacteria" id="AAF11006">
    <property type="protein sequence ID" value="AAF11006"/>
    <property type="gene ID" value="DR_1434"/>
</dbReference>
<dbReference type="GeneID" id="69517675"/>
<dbReference type="KEGG" id="dra:DR_1434"/>
<dbReference type="PATRIC" id="fig|243230.17.peg.1630"/>
<dbReference type="eggNOG" id="COG1660">
    <property type="taxonomic scope" value="Bacteria"/>
</dbReference>
<dbReference type="HOGENOM" id="CLU_059558_0_0_0"/>
<dbReference type="InParanoid" id="Q9RUF2"/>
<dbReference type="OrthoDB" id="9784461at2"/>
<dbReference type="Proteomes" id="UP000002524">
    <property type="component" value="Chromosome 1"/>
</dbReference>
<dbReference type="GO" id="GO:0005524">
    <property type="term" value="F:ATP binding"/>
    <property type="evidence" value="ECO:0007669"/>
    <property type="project" value="UniProtKB-UniRule"/>
</dbReference>
<dbReference type="GO" id="GO:0005525">
    <property type="term" value="F:GTP binding"/>
    <property type="evidence" value="ECO:0007669"/>
    <property type="project" value="UniProtKB-UniRule"/>
</dbReference>
<dbReference type="GO" id="GO:0060090">
    <property type="term" value="F:molecular adaptor activity"/>
    <property type="evidence" value="ECO:0000318"/>
    <property type="project" value="GO_Central"/>
</dbReference>
<dbReference type="Gene3D" id="3.40.50.300">
    <property type="entry name" value="P-loop containing nucleotide triphosphate hydrolases"/>
    <property type="match status" value="1"/>
</dbReference>
<dbReference type="HAMAP" id="MF_00636">
    <property type="entry name" value="RapZ_like"/>
    <property type="match status" value="1"/>
</dbReference>
<dbReference type="InterPro" id="IPR027417">
    <property type="entry name" value="P-loop_NTPase"/>
</dbReference>
<dbReference type="InterPro" id="IPR005337">
    <property type="entry name" value="RapZ-like"/>
</dbReference>
<dbReference type="InterPro" id="IPR053930">
    <property type="entry name" value="RapZ-like_N"/>
</dbReference>
<dbReference type="InterPro" id="IPR053931">
    <property type="entry name" value="RapZ_C"/>
</dbReference>
<dbReference type="NCBIfam" id="NF003828">
    <property type="entry name" value="PRK05416.1"/>
    <property type="match status" value="1"/>
</dbReference>
<dbReference type="PANTHER" id="PTHR30448">
    <property type="entry name" value="RNASE ADAPTER PROTEIN RAPZ"/>
    <property type="match status" value="1"/>
</dbReference>
<dbReference type="PANTHER" id="PTHR30448:SF0">
    <property type="entry name" value="RNASE ADAPTER PROTEIN RAPZ"/>
    <property type="match status" value="1"/>
</dbReference>
<dbReference type="Pfam" id="PF22740">
    <property type="entry name" value="PapZ_C"/>
    <property type="match status" value="1"/>
</dbReference>
<dbReference type="Pfam" id="PF03668">
    <property type="entry name" value="RapZ-like_N"/>
    <property type="match status" value="1"/>
</dbReference>
<dbReference type="PIRSF" id="PIRSF005052">
    <property type="entry name" value="P-loopkin"/>
    <property type="match status" value="1"/>
</dbReference>
<dbReference type="SUPFAM" id="SSF52540">
    <property type="entry name" value="P-loop containing nucleoside triphosphate hydrolases"/>
    <property type="match status" value="1"/>
</dbReference>
<proteinExistence type="inferred from homology"/>
<organism>
    <name type="scientific">Deinococcus radiodurans (strain ATCC 13939 / DSM 20539 / JCM 16871 / CCUG 27074 / LMG 4051 / NBRC 15346 / NCIMB 9279 / VKM B-1422 / R1)</name>
    <dbReference type="NCBI Taxonomy" id="243230"/>
    <lineage>
        <taxon>Bacteria</taxon>
        <taxon>Thermotogati</taxon>
        <taxon>Deinococcota</taxon>
        <taxon>Deinococci</taxon>
        <taxon>Deinococcales</taxon>
        <taxon>Deinococcaceae</taxon>
        <taxon>Deinococcus</taxon>
    </lineage>
</organism>
<name>Y1434_DEIRA</name>
<keyword id="KW-0067">ATP-binding</keyword>
<keyword id="KW-0342">GTP-binding</keyword>
<keyword id="KW-0547">Nucleotide-binding</keyword>
<keyword id="KW-1185">Reference proteome</keyword>
<protein>
    <recommendedName>
        <fullName evidence="1">Nucleotide-binding protein DR_1434</fullName>
    </recommendedName>
</protein>
<reference key="1">
    <citation type="journal article" date="1999" name="Science">
        <title>Genome sequence of the radioresistant bacterium Deinococcus radiodurans R1.</title>
        <authorList>
            <person name="White O."/>
            <person name="Eisen J.A."/>
            <person name="Heidelberg J.F."/>
            <person name="Hickey E.K."/>
            <person name="Peterson J.D."/>
            <person name="Dodson R.J."/>
            <person name="Haft D.H."/>
            <person name="Gwinn M.L."/>
            <person name="Nelson W.C."/>
            <person name="Richardson D.L."/>
            <person name="Moffat K.S."/>
            <person name="Qin H."/>
            <person name="Jiang L."/>
            <person name="Pamphile W."/>
            <person name="Crosby M."/>
            <person name="Shen M."/>
            <person name="Vamathevan J.J."/>
            <person name="Lam P."/>
            <person name="McDonald L.A."/>
            <person name="Utterback T.R."/>
            <person name="Zalewski C."/>
            <person name="Makarova K.S."/>
            <person name="Aravind L."/>
            <person name="Daly M.J."/>
            <person name="Minton K.W."/>
            <person name="Fleischmann R.D."/>
            <person name="Ketchum K.A."/>
            <person name="Nelson K.E."/>
            <person name="Salzberg S.L."/>
            <person name="Smith H.O."/>
            <person name="Venter J.C."/>
            <person name="Fraser C.M."/>
        </authorList>
    </citation>
    <scope>NUCLEOTIDE SEQUENCE [LARGE SCALE GENOMIC DNA]</scope>
    <source>
        <strain>ATCC 13939 / DSM 20539 / JCM 16871 / CCUG 27074 / LMG 4051 / NBRC 15346 / NCIMB 9279 / VKM B-1422 / R1</strain>
    </source>
</reference>
<gene>
    <name type="ordered locus">DR_1434</name>
</gene>
<comment type="function">
    <text evidence="1">Displays ATPase and GTPase activities.</text>
</comment>
<comment type="similarity">
    <text evidence="1">Belongs to the RapZ-like family.</text>
</comment>
<accession>Q9RUF2</accession>